<feature type="chain" id="PRO_0000091580" description="Protein-methionine-sulfoxide reductase heme-binding subunit MsrQ">
    <location>
        <begin position="1"/>
        <end position="210"/>
    </location>
</feature>
<feature type="transmembrane region" description="Helical" evidence="1">
    <location>
        <begin position="8"/>
        <end position="28"/>
    </location>
</feature>
<feature type="transmembrane region" description="Helical" evidence="1">
    <location>
        <begin position="37"/>
        <end position="57"/>
    </location>
</feature>
<feature type="transmembrane region" description="Helical" evidence="1">
    <location>
        <begin position="75"/>
        <end position="95"/>
    </location>
</feature>
<feature type="transmembrane region" description="Helical" evidence="1">
    <location>
        <begin position="110"/>
        <end position="130"/>
    </location>
</feature>
<feature type="transmembrane region" description="Helical" evidence="1">
    <location>
        <begin position="147"/>
        <end position="167"/>
    </location>
</feature>
<feature type="transmembrane region" description="Helical" evidence="1">
    <location>
        <begin position="169"/>
        <end position="189"/>
    </location>
</feature>
<sequence>MRYPFWRLAVFLAACVAPVWWLYQAWIFALGPDPGKVLVENFGLATLVMLLITLAMTPLQRLTGWPGWIVVRRQLGLWCFAYVVLHMTMYALFILGLDWGQLGVELVKRPYIIVGALAFLGLLALAVTSNRYSQRRLGSRWKKLHRLVYVILGLGLLHMFWIVRADLKEWALYAGIGAILLLLRVPMIARRIPRLGGAAKAGSIKVQNNG</sequence>
<evidence type="ECO:0000255" key="1">
    <source>
        <dbReference type="HAMAP-Rule" id="MF_01207"/>
    </source>
</evidence>
<proteinExistence type="inferred from homology"/>
<organism>
    <name type="scientific">Pseudomonas syringae pv. tomato (strain ATCC BAA-871 / DC3000)</name>
    <dbReference type="NCBI Taxonomy" id="223283"/>
    <lineage>
        <taxon>Bacteria</taxon>
        <taxon>Pseudomonadati</taxon>
        <taxon>Pseudomonadota</taxon>
        <taxon>Gammaproteobacteria</taxon>
        <taxon>Pseudomonadales</taxon>
        <taxon>Pseudomonadaceae</taxon>
        <taxon>Pseudomonas</taxon>
    </lineage>
</organism>
<keyword id="KW-0997">Cell inner membrane</keyword>
<keyword id="KW-1003">Cell membrane</keyword>
<keyword id="KW-0249">Electron transport</keyword>
<keyword id="KW-0285">Flavoprotein</keyword>
<keyword id="KW-0288">FMN</keyword>
<keyword id="KW-0349">Heme</keyword>
<keyword id="KW-0408">Iron</keyword>
<keyword id="KW-0472">Membrane</keyword>
<keyword id="KW-0479">Metal-binding</keyword>
<keyword id="KW-1185">Reference proteome</keyword>
<keyword id="KW-0812">Transmembrane</keyword>
<keyword id="KW-1133">Transmembrane helix</keyword>
<keyword id="KW-0813">Transport</keyword>
<gene>
    <name evidence="1" type="primary">msrQ</name>
    <name type="ordered locus">PSPTO_0986</name>
</gene>
<comment type="function">
    <text evidence="1">Part of the MsrPQ system that repairs oxidized periplasmic proteins containing methionine sulfoxide residues (Met-O), using respiratory chain electrons. Thus protects these proteins from oxidative-stress damage caused by reactive species of oxygen and chlorine generated by the host defense mechanisms. MsrPQ is essential for the maintenance of envelope integrity under bleach stress, rescuing a wide series of structurally unrelated periplasmic proteins from methionine oxidation. MsrQ provides electrons for reduction to the reductase catalytic subunit MsrP, using the quinone pool of the respiratory chain.</text>
</comment>
<comment type="cofactor">
    <cofactor evidence="1">
        <name>FMN</name>
        <dbReference type="ChEBI" id="CHEBI:58210"/>
    </cofactor>
    <text evidence="1">Binds 1 FMN per subunit.</text>
</comment>
<comment type="cofactor">
    <cofactor evidence="1">
        <name>heme b</name>
        <dbReference type="ChEBI" id="CHEBI:60344"/>
    </cofactor>
    <text evidence="1">Binds 1 heme b (iron(II)-protoporphyrin IX) group per subunit.</text>
</comment>
<comment type="subunit">
    <text evidence="1">Heterodimer of a catalytic subunit (MsrP) and a heme-binding subunit (MsrQ).</text>
</comment>
<comment type="subcellular location">
    <subcellularLocation>
        <location evidence="1">Cell inner membrane</location>
        <topology evidence="1">Multi-pass membrane protein</topology>
    </subcellularLocation>
</comment>
<comment type="similarity">
    <text evidence="1">Belongs to the MsrQ family.</text>
</comment>
<dbReference type="EMBL" id="AE016853">
    <property type="protein sequence ID" value="AAO54520.1"/>
    <property type="molecule type" value="Genomic_DNA"/>
</dbReference>
<dbReference type="RefSeq" id="NP_790825.1">
    <property type="nucleotide sequence ID" value="NC_004578.1"/>
</dbReference>
<dbReference type="RefSeq" id="WP_010201804.1">
    <property type="nucleotide sequence ID" value="NC_004578.1"/>
</dbReference>
<dbReference type="SMR" id="Q888N1"/>
<dbReference type="STRING" id="223283.PSPTO_0986"/>
<dbReference type="GeneID" id="1182615"/>
<dbReference type="KEGG" id="pst:PSPTO_0986"/>
<dbReference type="PATRIC" id="fig|223283.9.peg.995"/>
<dbReference type="eggNOG" id="COG2717">
    <property type="taxonomic scope" value="Bacteria"/>
</dbReference>
<dbReference type="HOGENOM" id="CLU_080662_0_1_6"/>
<dbReference type="OrthoDB" id="9788328at2"/>
<dbReference type="PhylomeDB" id="Q888N1"/>
<dbReference type="Proteomes" id="UP000002515">
    <property type="component" value="Chromosome"/>
</dbReference>
<dbReference type="GO" id="GO:0005886">
    <property type="term" value="C:plasma membrane"/>
    <property type="evidence" value="ECO:0007669"/>
    <property type="project" value="UniProtKB-SubCell"/>
</dbReference>
<dbReference type="GO" id="GO:0009055">
    <property type="term" value="F:electron transfer activity"/>
    <property type="evidence" value="ECO:0007669"/>
    <property type="project" value="UniProtKB-UniRule"/>
</dbReference>
<dbReference type="GO" id="GO:0010181">
    <property type="term" value="F:FMN binding"/>
    <property type="evidence" value="ECO:0007669"/>
    <property type="project" value="UniProtKB-UniRule"/>
</dbReference>
<dbReference type="GO" id="GO:0020037">
    <property type="term" value="F:heme binding"/>
    <property type="evidence" value="ECO:0007669"/>
    <property type="project" value="UniProtKB-UniRule"/>
</dbReference>
<dbReference type="GO" id="GO:0046872">
    <property type="term" value="F:metal ion binding"/>
    <property type="evidence" value="ECO:0007669"/>
    <property type="project" value="UniProtKB-KW"/>
</dbReference>
<dbReference type="GO" id="GO:0016679">
    <property type="term" value="F:oxidoreductase activity, acting on diphenols and related substances as donors"/>
    <property type="evidence" value="ECO:0007669"/>
    <property type="project" value="TreeGrafter"/>
</dbReference>
<dbReference type="GO" id="GO:0030091">
    <property type="term" value="P:protein repair"/>
    <property type="evidence" value="ECO:0007669"/>
    <property type="project" value="UniProtKB-UniRule"/>
</dbReference>
<dbReference type="HAMAP" id="MF_01207">
    <property type="entry name" value="MsrQ"/>
    <property type="match status" value="1"/>
</dbReference>
<dbReference type="InterPro" id="IPR013130">
    <property type="entry name" value="Fe3_Rdtase_TM_dom"/>
</dbReference>
<dbReference type="InterPro" id="IPR022837">
    <property type="entry name" value="MsrQ-like"/>
</dbReference>
<dbReference type="NCBIfam" id="NF003831">
    <property type="entry name" value="PRK05419.1-2"/>
    <property type="match status" value="1"/>
</dbReference>
<dbReference type="PANTHER" id="PTHR36964">
    <property type="entry name" value="PROTEIN-METHIONINE-SULFOXIDE REDUCTASE HEME-BINDING SUBUNIT MSRQ"/>
    <property type="match status" value="1"/>
</dbReference>
<dbReference type="PANTHER" id="PTHR36964:SF1">
    <property type="entry name" value="PROTEIN-METHIONINE-SULFOXIDE REDUCTASE HEME-BINDING SUBUNIT MSRQ"/>
    <property type="match status" value="1"/>
</dbReference>
<dbReference type="Pfam" id="PF01794">
    <property type="entry name" value="Ferric_reduct"/>
    <property type="match status" value="1"/>
</dbReference>
<name>MSRQ_PSESM</name>
<reference key="1">
    <citation type="journal article" date="2003" name="Proc. Natl. Acad. Sci. U.S.A.">
        <title>The complete genome sequence of the Arabidopsis and tomato pathogen Pseudomonas syringae pv. tomato DC3000.</title>
        <authorList>
            <person name="Buell C.R."/>
            <person name="Joardar V."/>
            <person name="Lindeberg M."/>
            <person name="Selengut J."/>
            <person name="Paulsen I.T."/>
            <person name="Gwinn M.L."/>
            <person name="Dodson R.J."/>
            <person name="DeBoy R.T."/>
            <person name="Durkin A.S."/>
            <person name="Kolonay J.F."/>
            <person name="Madupu R."/>
            <person name="Daugherty S.C."/>
            <person name="Brinkac L.M."/>
            <person name="Beanan M.J."/>
            <person name="Haft D.H."/>
            <person name="Nelson W.C."/>
            <person name="Davidsen T.M."/>
            <person name="Zafar N."/>
            <person name="Zhou L."/>
            <person name="Liu J."/>
            <person name="Yuan Q."/>
            <person name="Khouri H.M."/>
            <person name="Fedorova N.B."/>
            <person name="Tran B."/>
            <person name="Russell D."/>
            <person name="Berry K.J."/>
            <person name="Utterback T.R."/>
            <person name="Van Aken S.E."/>
            <person name="Feldblyum T.V."/>
            <person name="D'Ascenzo M."/>
            <person name="Deng W.-L."/>
            <person name="Ramos A.R."/>
            <person name="Alfano J.R."/>
            <person name="Cartinhour S."/>
            <person name="Chatterjee A.K."/>
            <person name="Delaney T.P."/>
            <person name="Lazarowitz S.G."/>
            <person name="Martin G.B."/>
            <person name="Schneider D.J."/>
            <person name="Tang X."/>
            <person name="Bender C.L."/>
            <person name="White O."/>
            <person name="Fraser C.M."/>
            <person name="Collmer A."/>
        </authorList>
    </citation>
    <scope>NUCLEOTIDE SEQUENCE [LARGE SCALE GENOMIC DNA]</scope>
    <source>
        <strain>ATCC BAA-871 / DC3000</strain>
    </source>
</reference>
<protein>
    <recommendedName>
        <fullName evidence="1">Protein-methionine-sulfoxide reductase heme-binding subunit MsrQ</fullName>
    </recommendedName>
    <alternativeName>
        <fullName evidence="1">Flavocytochrome MsrQ</fullName>
    </alternativeName>
</protein>
<accession>Q888N1</accession>